<evidence type="ECO:0000250" key="1">
    <source>
        <dbReference type="UniProtKB" id="Q9UK39"/>
    </source>
</evidence>
<evidence type="ECO:0000255" key="2"/>
<evidence type="ECO:0000256" key="3">
    <source>
        <dbReference type="SAM" id="MobiDB-lite"/>
    </source>
</evidence>
<evidence type="ECO:0000269" key="4">
    <source>
    </source>
</evidence>
<evidence type="ECO:0000269" key="5">
    <source>
    </source>
</evidence>
<evidence type="ECO:0000269" key="6">
    <source>
    </source>
</evidence>
<evidence type="ECO:0000269" key="7">
    <source>
    </source>
</evidence>
<evidence type="ECO:0000269" key="8">
    <source>
    </source>
</evidence>
<evidence type="ECO:0000269" key="9">
    <source>
    </source>
</evidence>
<evidence type="ECO:0000269" key="10">
    <source>
    </source>
</evidence>
<evidence type="ECO:0000269" key="11">
    <source>
    </source>
</evidence>
<evidence type="ECO:0000269" key="12">
    <source>
    </source>
</evidence>
<evidence type="ECO:0000269" key="13">
    <source>
    </source>
</evidence>
<evidence type="ECO:0000269" key="14">
    <source>
    </source>
</evidence>
<evidence type="ECO:0000269" key="15">
    <source>
    </source>
</evidence>
<evidence type="ECO:0000303" key="16">
    <source>
    </source>
</evidence>
<evidence type="ECO:0000305" key="17"/>
<evidence type="ECO:0000312" key="18">
    <source>
        <dbReference type="MGI" id="MGI:109382"/>
    </source>
</evidence>
<protein>
    <recommendedName>
        <fullName evidence="18">Nocturnin</fullName>
        <ecNumber evidence="1">3.1.3.108</ecNumber>
    </recommendedName>
    <alternativeName>
        <fullName>Carbon catabolite repression 4-like protein</fullName>
    </alternativeName>
</protein>
<proteinExistence type="evidence at protein level"/>
<feature type="transit peptide" description="Mitochondrion" evidence="2">
    <location>
        <begin position="1"/>
        <end position="73"/>
    </location>
</feature>
<feature type="chain" id="PRO_0000218569" description="Nocturnin" evidence="2">
    <location>
        <begin position="74"/>
        <end position="429"/>
    </location>
</feature>
<feature type="region of interest" description="Disordered" evidence="3">
    <location>
        <begin position="21"/>
        <end position="68"/>
    </location>
</feature>
<feature type="region of interest" description="Interaction with PPARG" evidence="8">
    <location>
        <begin position="341"/>
        <end position="351"/>
    </location>
</feature>
<feature type="binding site" evidence="1">
    <location>
        <position position="193"/>
    </location>
    <ligand>
        <name>Mg(2+)</name>
        <dbReference type="ChEBI" id="CHEBI:18420"/>
    </ligand>
</feature>
<feature type="binding site" evidence="1">
    <location>
        <position position="193"/>
    </location>
    <ligand>
        <name>substrate</name>
    </ligand>
</feature>
<feature type="binding site" evidence="1">
    <location>
        <begin position="217"/>
        <end position="219"/>
    </location>
    <ligand>
        <name>substrate</name>
    </ligand>
</feature>
<feature type="binding site" evidence="1">
    <location>
        <position position="261"/>
    </location>
    <ligand>
        <name>substrate</name>
    </ligand>
</feature>
<feature type="binding site" evidence="1">
    <location>
        <begin position="284"/>
        <end position="287"/>
    </location>
    <ligand>
        <name>substrate</name>
    </ligand>
</feature>
<feature type="binding site" evidence="1">
    <location>
        <begin position="322"/>
        <end position="324"/>
    </location>
    <ligand>
        <name>substrate</name>
    </ligand>
</feature>
<feature type="binding site" evidence="1">
    <location>
        <position position="412"/>
    </location>
    <ligand>
        <name>substrate</name>
    </ligand>
</feature>
<feature type="splice variant" id="VSP_016677" description="In isoform 2." evidence="16">
    <location>
        <begin position="1"/>
        <end position="64"/>
    </location>
</feature>
<accession>O35710</accession>
<accession>Q9QZG9</accession>
<dbReference type="EC" id="3.1.3.108" evidence="1"/>
<dbReference type="EMBL" id="U70139">
    <property type="protein sequence ID" value="AAB62717.1"/>
    <property type="status" value="ALT_FRAME"/>
    <property type="molecule type" value="mRNA"/>
</dbReference>
<dbReference type="EMBL" id="AF183960">
    <property type="protein sequence ID" value="AAD56547.1"/>
    <property type="molecule type" value="mRNA"/>
</dbReference>
<dbReference type="EMBL" id="AF199491">
    <property type="protein sequence ID" value="AAG01384.1"/>
    <property type="molecule type" value="mRNA"/>
</dbReference>
<dbReference type="EMBL" id="AK087790">
    <property type="protein sequence ID" value="BAC40004.1"/>
    <property type="molecule type" value="mRNA"/>
</dbReference>
<dbReference type="CCDS" id="CCDS17336.1">
    <molecule id="O35710-1"/>
</dbReference>
<dbReference type="RefSeq" id="NP_033964.1">
    <molecule id="O35710-1"/>
    <property type="nucleotide sequence ID" value="NM_009834.2"/>
</dbReference>
<dbReference type="SMR" id="O35710"/>
<dbReference type="DIP" id="DIP-60436N"/>
<dbReference type="FunCoup" id="O35710">
    <property type="interactions" value="1132"/>
</dbReference>
<dbReference type="IntAct" id="O35710">
    <property type="interactions" value="1"/>
</dbReference>
<dbReference type="STRING" id="10090.ENSMUSP00000023849"/>
<dbReference type="GlyGen" id="O35710">
    <property type="glycosylation" value="2 sites, 1 N-linked glycan (1 site), 1 O-linked glycan (1 site)"/>
</dbReference>
<dbReference type="iPTMnet" id="O35710"/>
<dbReference type="PhosphoSitePlus" id="O35710"/>
<dbReference type="PaxDb" id="10090-ENSMUSP00000023849"/>
<dbReference type="ProteomicsDB" id="252916">
    <molecule id="O35710-1"/>
</dbReference>
<dbReference type="ProteomicsDB" id="252917">
    <molecule id="O35710-2"/>
</dbReference>
<dbReference type="Antibodypedia" id="16153">
    <property type="antibodies" value="125 antibodies from 30 providers"/>
</dbReference>
<dbReference type="DNASU" id="12457"/>
<dbReference type="Ensembl" id="ENSMUST00000023849.15">
    <molecule id="O35710-1"/>
    <property type="protein sequence ID" value="ENSMUSP00000023849.9"/>
    <property type="gene ID" value="ENSMUSG00000023087.17"/>
</dbReference>
<dbReference type="Ensembl" id="ENSMUST00000144826.2">
    <molecule id="O35710-2"/>
    <property type="protein sequence ID" value="ENSMUSP00000141416.2"/>
    <property type="gene ID" value="ENSMUSG00000023087.17"/>
</dbReference>
<dbReference type="GeneID" id="12457"/>
<dbReference type="KEGG" id="mmu:12457"/>
<dbReference type="UCSC" id="uc008pdm.2">
    <molecule id="O35710-1"/>
    <property type="organism name" value="mouse"/>
</dbReference>
<dbReference type="AGR" id="MGI:109382"/>
<dbReference type="CTD" id="25819"/>
<dbReference type="MGI" id="MGI:109382">
    <property type="gene designation" value="Noct"/>
</dbReference>
<dbReference type="VEuPathDB" id="HostDB:ENSMUSG00000023087"/>
<dbReference type="eggNOG" id="KOG0620">
    <property type="taxonomic scope" value="Eukaryota"/>
</dbReference>
<dbReference type="GeneTree" id="ENSGT00940000155249"/>
<dbReference type="HOGENOM" id="CLU_016428_1_2_1"/>
<dbReference type="InParanoid" id="O35710"/>
<dbReference type="OMA" id="RAACSMG"/>
<dbReference type="OrthoDB" id="276515at2759"/>
<dbReference type="PhylomeDB" id="O35710"/>
<dbReference type="TreeFam" id="TF323175"/>
<dbReference type="BRENDA" id="3.1.13.4">
    <property type="organism ID" value="3474"/>
</dbReference>
<dbReference type="BRENDA" id="3.1.3.108">
    <property type="organism ID" value="3474"/>
</dbReference>
<dbReference type="BioGRID-ORCS" id="12457">
    <property type="hits" value="2 hits in 46 CRISPR screens"/>
</dbReference>
<dbReference type="ChiTaRS" id="Noct">
    <property type="organism name" value="mouse"/>
</dbReference>
<dbReference type="PRO" id="PR:O35710"/>
<dbReference type="Proteomes" id="UP000000589">
    <property type="component" value="Chromosome 3"/>
</dbReference>
<dbReference type="RNAct" id="O35710">
    <property type="molecule type" value="protein"/>
</dbReference>
<dbReference type="Bgee" id="ENSMUSG00000023087">
    <property type="expression patterns" value="Expressed in secondary oocyte and 266 other cell types or tissues"/>
</dbReference>
<dbReference type="ExpressionAtlas" id="O35710">
    <property type="expression patterns" value="baseline and differential"/>
</dbReference>
<dbReference type="GO" id="GO:0005737">
    <property type="term" value="C:cytoplasm"/>
    <property type="evidence" value="ECO:0000314"/>
    <property type="project" value="UniProtKB"/>
</dbReference>
<dbReference type="GO" id="GO:0005739">
    <property type="term" value="C:mitochondrion"/>
    <property type="evidence" value="ECO:0000250"/>
    <property type="project" value="UniProtKB"/>
</dbReference>
<dbReference type="GO" id="GO:0005634">
    <property type="term" value="C:nucleus"/>
    <property type="evidence" value="ECO:0000314"/>
    <property type="project" value="UniProtKB"/>
</dbReference>
<dbReference type="GO" id="GO:0000932">
    <property type="term" value="C:P-body"/>
    <property type="evidence" value="ECO:0000314"/>
    <property type="project" value="MGI"/>
</dbReference>
<dbReference type="GO" id="GO:0048471">
    <property type="term" value="C:perinuclear region of cytoplasm"/>
    <property type="evidence" value="ECO:0000314"/>
    <property type="project" value="UniProtKB"/>
</dbReference>
<dbReference type="GO" id="GO:0046872">
    <property type="term" value="F:metal ion binding"/>
    <property type="evidence" value="ECO:0007669"/>
    <property type="project" value="UniProtKB-KW"/>
</dbReference>
<dbReference type="GO" id="GO:0003729">
    <property type="term" value="F:mRNA binding"/>
    <property type="evidence" value="ECO:0000314"/>
    <property type="project" value="UniProtKB"/>
</dbReference>
<dbReference type="GO" id="GO:0019178">
    <property type="term" value="F:NADP phosphatase activity"/>
    <property type="evidence" value="ECO:0000250"/>
    <property type="project" value="UniProtKB"/>
</dbReference>
<dbReference type="GO" id="GO:0102757">
    <property type="term" value="F:NADPH phosphatase activity"/>
    <property type="evidence" value="ECO:0000250"/>
    <property type="project" value="UniProtKB"/>
</dbReference>
<dbReference type="GO" id="GO:0004535">
    <property type="term" value="F:poly(A)-specific ribonuclease activity"/>
    <property type="evidence" value="ECO:0000314"/>
    <property type="project" value="UniProtKB"/>
</dbReference>
<dbReference type="GO" id="GO:0032922">
    <property type="term" value="P:circadian regulation of gene expression"/>
    <property type="evidence" value="ECO:0000315"/>
    <property type="project" value="UniProtKB"/>
</dbReference>
<dbReference type="GO" id="GO:0007623">
    <property type="term" value="P:circadian rhythm"/>
    <property type="evidence" value="ECO:0000270"/>
    <property type="project" value="UniProtKB"/>
</dbReference>
<dbReference type="GO" id="GO:0000290">
    <property type="term" value="P:deadenylation-dependent decapping of nuclear-transcribed mRNA"/>
    <property type="evidence" value="ECO:0000316"/>
    <property type="project" value="MGI"/>
</dbReference>
<dbReference type="GO" id="GO:0048255">
    <property type="term" value="P:mRNA stabilization"/>
    <property type="evidence" value="ECO:0000315"/>
    <property type="project" value="UniProtKB"/>
</dbReference>
<dbReference type="GO" id="GO:0006739">
    <property type="term" value="P:NADP metabolic process"/>
    <property type="evidence" value="ECO:0000250"/>
    <property type="project" value="UniProtKB"/>
</dbReference>
<dbReference type="GO" id="GO:0010629">
    <property type="term" value="P:negative regulation of gene expression"/>
    <property type="evidence" value="ECO:0000315"/>
    <property type="project" value="UniProtKB"/>
</dbReference>
<dbReference type="GO" id="GO:0045668">
    <property type="term" value="P:negative regulation of osteoblast differentiation"/>
    <property type="evidence" value="ECO:0000315"/>
    <property type="project" value="UniProtKB"/>
</dbReference>
<dbReference type="GO" id="GO:0033962">
    <property type="term" value="P:P-body assembly"/>
    <property type="evidence" value="ECO:0000316"/>
    <property type="project" value="MGI"/>
</dbReference>
<dbReference type="GO" id="GO:0045600">
    <property type="term" value="P:positive regulation of fat cell differentiation"/>
    <property type="evidence" value="ECO:0000315"/>
    <property type="project" value="UniProtKB"/>
</dbReference>
<dbReference type="GO" id="GO:0042752">
    <property type="term" value="P:regulation of circadian rhythm"/>
    <property type="evidence" value="ECO:0000315"/>
    <property type="project" value="UniProtKB"/>
</dbReference>
<dbReference type="GO" id="GO:0045995">
    <property type="term" value="P:regulation of embryonic development"/>
    <property type="evidence" value="ECO:0000315"/>
    <property type="project" value="UniProtKB"/>
</dbReference>
<dbReference type="GO" id="GO:0032496">
    <property type="term" value="P:response to lipopolysaccharide"/>
    <property type="evidence" value="ECO:0000314"/>
    <property type="project" value="UniProtKB"/>
</dbReference>
<dbReference type="CDD" id="cd09096">
    <property type="entry name" value="Deadenylase_nocturnin"/>
    <property type="match status" value="1"/>
</dbReference>
<dbReference type="FunFam" id="3.60.10.10:FF:000012">
    <property type="entry name" value="nocturnin isoform X2"/>
    <property type="match status" value="1"/>
</dbReference>
<dbReference type="Gene3D" id="3.60.10.10">
    <property type="entry name" value="Endonuclease/exonuclease/phosphatase"/>
    <property type="match status" value="1"/>
</dbReference>
<dbReference type="InterPro" id="IPR050410">
    <property type="entry name" value="CCR4/nocturin_mRNA_transcr"/>
</dbReference>
<dbReference type="InterPro" id="IPR034965">
    <property type="entry name" value="Deadenylase_nocturnin"/>
</dbReference>
<dbReference type="InterPro" id="IPR036691">
    <property type="entry name" value="Endo/exonu/phosph_ase_sf"/>
</dbReference>
<dbReference type="InterPro" id="IPR005135">
    <property type="entry name" value="Endo/exonuclease/phosphatase"/>
</dbReference>
<dbReference type="PANTHER" id="PTHR12121">
    <property type="entry name" value="CARBON CATABOLITE REPRESSOR PROTEIN 4"/>
    <property type="match status" value="1"/>
</dbReference>
<dbReference type="PANTHER" id="PTHR12121:SF45">
    <property type="entry name" value="NOCTURNIN"/>
    <property type="match status" value="1"/>
</dbReference>
<dbReference type="Pfam" id="PF03372">
    <property type="entry name" value="Exo_endo_phos"/>
    <property type="match status" value="1"/>
</dbReference>
<dbReference type="SUPFAM" id="SSF56219">
    <property type="entry name" value="DNase I-like"/>
    <property type="match status" value="1"/>
</dbReference>
<reference key="1">
    <citation type="journal article" date="1997" name="J. Biol. Chem.">
        <title>Characterization of two age-induced intracisternal A-particle-related transcripts in the mouse liver. Transcriptional read-through into an open reading frame with similarities to the yeast ccr4 transcription factor.</title>
        <authorList>
            <person name="Puech A."/>
            <person name="Dupressoir A."/>
            <person name="Loireau M.-P."/>
            <person name="Mattei M.-G."/>
            <person name="Heidmann T."/>
        </authorList>
    </citation>
    <scope>NUCLEOTIDE SEQUENCE [MRNA] (ISOFORM 2)</scope>
    <source>
        <strain>DBA/2J</strain>
        <tissue>Liver</tissue>
    </source>
</reference>
<reference key="2">
    <citation type="journal article" date="1999" name="J. Biol. Chem.">
        <title>Characterization of a mammalian gene related to the yeast CCR4 general transcription factor and revealed by transposon insertion.</title>
        <authorList>
            <person name="Dupressoir A."/>
            <person name="Barbot W."/>
            <person name="Loireau M.-P."/>
            <person name="Heidmann T."/>
        </authorList>
    </citation>
    <scope>NUCLEOTIDE SEQUENCE [MRNA] (ISOFORM 1)</scope>
    <scope>TISSUE SPECIFICITY</scope>
    <source>
        <strain>BALB/cJ</strain>
        <tissue>Brain</tissue>
    </source>
</reference>
<reference key="3">
    <citation type="journal article" date="2001" name="BMC Dev. Biol.">
        <title>Rhythmic expression of nocturnin mRNA in multiple tissues of the mouse.</title>
        <authorList>
            <person name="Wang Y."/>
            <person name="Osterbur D.L."/>
            <person name="Megaw P.L."/>
            <person name="Tosini G."/>
            <person name="Fukuhara C."/>
            <person name="Green C.B."/>
            <person name="Besharse J.C."/>
        </authorList>
    </citation>
    <scope>NUCLEOTIDE SEQUENCE [MRNA] (ISOFORM 1)</scope>
    <scope>CIRCADIAN EXPRESSION</scope>
    <scope>TISSUE SPECIFICITY</scope>
    <source>
        <strain>BALB/cJ</strain>
        <tissue>Retina</tissue>
    </source>
</reference>
<reference key="4">
    <citation type="journal article" date="2005" name="Science">
        <title>The transcriptional landscape of the mammalian genome.</title>
        <authorList>
            <person name="Carninci P."/>
            <person name="Kasukawa T."/>
            <person name="Katayama S."/>
            <person name="Gough J."/>
            <person name="Frith M.C."/>
            <person name="Maeda N."/>
            <person name="Oyama R."/>
            <person name="Ravasi T."/>
            <person name="Lenhard B."/>
            <person name="Wells C."/>
            <person name="Kodzius R."/>
            <person name="Shimokawa K."/>
            <person name="Bajic V.B."/>
            <person name="Brenner S.E."/>
            <person name="Batalov S."/>
            <person name="Forrest A.R."/>
            <person name="Zavolan M."/>
            <person name="Davis M.J."/>
            <person name="Wilming L.G."/>
            <person name="Aidinis V."/>
            <person name="Allen J.E."/>
            <person name="Ambesi-Impiombato A."/>
            <person name="Apweiler R."/>
            <person name="Aturaliya R.N."/>
            <person name="Bailey T.L."/>
            <person name="Bansal M."/>
            <person name="Baxter L."/>
            <person name="Beisel K.W."/>
            <person name="Bersano T."/>
            <person name="Bono H."/>
            <person name="Chalk A.M."/>
            <person name="Chiu K.P."/>
            <person name="Choudhary V."/>
            <person name="Christoffels A."/>
            <person name="Clutterbuck D.R."/>
            <person name="Crowe M.L."/>
            <person name="Dalla E."/>
            <person name="Dalrymple B.P."/>
            <person name="de Bono B."/>
            <person name="Della Gatta G."/>
            <person name="di Bernardo D."/>
            <person name="Down T."/>
            <person name="Engstrom P."/>
            <person name="Fagiolini M."/>
            <person name="Faulkner G."/>
            <person name="Fletcher C.F."/>
            <person name="Fukushima T."/>
            <person name="Furuno M."/>
            <person name="Futaki S."/>
            <person name="Gariboldi M."/>
            <person name="Georgii-Hemming P."/>
            <person name="Gingeras T.R."/>
            <person name="Gojobori T."/>
            <person name="Green R.E."/>
            <person name="Gustincich S."/>
            <person name="Harbers M."/>
            <person name="Hayashi Y."/>
            <person name="Hensch T.K."/>
            <person name="Hirokawa N."/>
            <person name="Hill D."/>
            <person name="Huminiecki L."/>
            <person name="Iacono M."/>
            <person name="Ikeo K."/>
            <person name="Iwama A."/>
            <person name="Ishikawa T."/>
            <person name="Jakt M."/>
            <person name="Kanapin A."/>
            <person name="Katoh M."/>
            <person name="Kawasawa Y."/>
            <person name="Kelso J."/>
            <person name="Kitamura H."/>
            <person name="Kitano H."/>
            <person name="Kollias G."/>
            <person name="Krishnan S.P."/>
            <person name="Kruger A."/>
            <person name="Kummerfeld S.K."/>
            <person name="Kurochkin I.V."/>
            <person name="Lareau L.F."/>
            <person name="Lazarevic D."/>
            <person name="Lipovich L."/>
            <person name="Liu J."/>
            <person name="Liuni S."/>
            <person name="McWilliam S."/>
            <person name="Madan Babu M."/>
            <person name="Madera M."/>
            <person name="Marchionni L."/>
            <person name="Matsuda H."/>
            <person name="Matsuzawa S."/>
            <person name="Miki H."/>
            <person name="Mignone F."/>
            <person name="Miyake S."/>
            <person name="Morris K."/>
            <person name="Mottagui-Tabar S."/>
            <person name="Mulder N."/>
            <person name="Nakano N."/>
            <person name="Nakauchi H."/>
            <person name="Ng P."/>
            <person name="Nilsson R."/>
            <person name="Nishiguchi S."/>
            <person name="Nishikawa S."/>
            <person name="Nori F."/>
            <person name="Ohara O."/>
            <person name="Okazaki Y."/>
            <person name="Orlando V."/>
            <person name="Pang K.C."/>
            <person name="Pavan W.J."/>
            <person name="Pavesi G."/>
            <person name="Pesole G."/>
            <person name="Petrovsky N."/>
            <person name="Piazza S."/>
            <person name="Reed J."/>
            <person name="Reid J.F."/>
            <person name="Ring B.Z."/>
            <person name="Ringwald M."/>
            <person name="Rost B."/>
            <person name="Ruan Y."/>
            <person name="Salzberg S.L."/>
            <person name="Sandelin A."/>
            <person name="Schneider C."/>
            <person name="Schoenbach C."/>
            <person name="Sekiguchi K."/>
            <person name="Semple C.A."/>
            <person name="Seno S."/>
            <person name="Sessa L."/>
            <person name="Sheng Y."/>
            <person name="Shibata Y."/>
            <person name="Shimada H."/>
            <person name="Shimada K."/>
            <person name="Silva D."/>
            <person name="Sinclair B."/>
            <person name="Sperling S."/>
            <person name="Stupka E."/>
            <person name="Sugiura K."/>
            <person name="Sultana R."/>
            <person name="Takenaka Y."/>
            <person name="Taki K."/>
            <person name="Tammoja K."/>
            <person name="Tan S.L."/>
            <person name="Tang S."/>
            <person name="Taylor M.S."/>
            <person name="Tegner J."/>
            <person name="Teichmann S.A."/>
            <person name="Ueda H.R."/>
            <person name="van Nimwegen E."/>
            <person name="Verardo R."/>
            <person name="Wei C.L."/>
            <person name="Yagi K."/>
            <person name="Yamanishi H."/>
            <person name="Zabarovsky E."/>
            <person name="Zhu S."/>
            <person name="Zimmer A."/>
            <person name="Hide W."/>
            <person name="Bult C."/>
            <person name="Grimmond S.M."/>
            <person name="Teasdale R.D."/>
            <person name="Liu E.T."/>
            <person name="Brusic V."/>
            <person name="Quackenbush J."/>
            <person name="Wahlestedt C."/>
            <person name="Mattick J.S."/>
            <person name="Hume D.A."/>
            <person name="Kai C."/>
            <person name="Sasaki D."/>
            <person name="Tomaru Y."/>
            <person name="Fukuda S."/>
            <person name="Kanamori-Katayama M."/>
            <person name="Suzuki M."/>
            <person name="Aoki J."/>
            <person name="Arakawa T."/>
            <person name="Iida J."/>
            <person name="Imamura K."/>
            <person name="Itoh M."/>
            <person name="Kato T."/>
            <person name="Kawaji H."/>
            <person name="Kawagashira N."/>
            <person name="Kawashima T."/>
            <person name="Kojima M."/>
            <person name="Kondo S."/>
            <person name="Konno H."/>
            <person name="Nakano K."/>
            <person name="Ninomiya N."/>
            <person name="Nishio T."/>
            <person name="Okada M."/>
            <person name="Plessy C."/>
            <person name="Shibata K."/>
            <person name="Shiraki T."/>
            <person name="Suzuki S."/>
            <person name="Tagami M."/>
            <person name="Waki K."/>
            <person name="Watahiki A."/>
            <person name="Okamura-Oho Y."/>
            <person name="Suzuki H."/>
            <person name="Kawai J."/>
            <person name="Hayashizaki Y."/>
        </authorList>
    </citation>
    <scope>NUCLEOTIDE SEQUENCE [LARGE SCALE MRNA] (ISOFORM 1)</scope>
    <source>
        <strain>C57BL/6J</strain>
        <tissue>Ovary</tissue>
    </source>
</reference>
<reference key="5">
    <citation type="journal article" date="2007" name="RNA">
        <title>Immediate early response of the circadian polyA ribonuclease nocturnin to two extracellular stimuli.</title>
        <authorList>
            <person name="Garbarino-Pico E."/>
            <person name="Niu S."/>
            <person name="Rollag M.D."/>
            <person name="Strayer C.A."/>
            <person name="Besharse J.C."/>
            <person name="Green C.B."/>
        </authorList>
    </citation>
    <scope>INDUCTION</scope>
</reference>
<reference key="6">
    <citation type="journal article" date="2010" name="Ann. N. Y. Acad. Sci.">
        <title>Nocturnin: a circadian target of Pparg-induced adipogenesis.</title>
        <authorList>
            <person name="Kawai M."/>
            <person name="Green C.B."/>
            <person name="Horowitz M."/>
            <person name="Ackert-Bicknell C."/>
            <person name="Lecka-Czernik B."/>
            <person name="Rosen C.J."/>
        </authorList>
    </citation>
    <scope>INDUCTION</scope>
    <scope>TISSUE SPECIFICITY</scope>
</reference>
<reference key="7">
    <citation type="journal article" date="2010" name="Cell">
        <title>A tissue-specific atlas of mouse protein phosphorylation and expression.</title>
        <authorList>
            <person name="Huttlin E.L."/>
            <person name="Jedrychowski M.P."/>
            <person name="Elias J.E."/>
            <person name="Goswami T."/>
            <person name="Rad R."/>
            <person name="Beausoleil S.A."/>
            <person name="Villen J."/>
            <person name="Haas W."/>
            <person name="Sowa M.E."/>
            <person name="Gygi S.P."/>
        </authorList>
    </citation>
    <scope>IDENTIFICATION BY MASS SPECTROMETRY [LARGE SCALE ANALYSIS]</scope>
    <source>
        <tissue>Brain</tissue>
    </source>
</reference>
<reference key="8">
    <citation type="journal article" date="2010" name="Endocrinology">
        <title>Nocturnin suppresses igf1 expression in bone by targeting the 3' untranslated region of igf1 mRNA.</title>
        <authorList>
            <person name="Kawai M."/>
            <person name="Delany A.M."/>
            <person name="Green C.B."/>
            <person name="Adamo M.L."/>
            <person name="Rosen C.J."/>
        </authorList>
    </citation>
    <scope>FUNCTION</scope>
    <scope>INDUCTION</scope>
</reference>
<reference key="9">
    <citation type="journal article" date="2010" name="Proc. Natl. Acad. Sci. U.S.A.">
        <title>A circadian-regulated gene, Nocturnin, promotes adipogenesis by stimulating PPAR-gamma nuclear translocation.</title>
        <authorList>
            <person name="Kawai M."/>
            <person name="Green C.B."/>
            <person name="Lecka-Czernik B."/>
            <person name="Douris N."/>
            <person name="Gilbert M.R."/>
            <person name="Kojima S."/>
            <person name="Ackert-Bicknell C."/>
            <person name="Garg N."/>
            <person name="Horowitz M.C."/>
            <person name="Adamo M.L."/>
            <person name="Clemmons D.R."/>
            <person name="Rosen C.J."/>
        </authorList>
    </citation>
    <scope>FUNCTION</scope>
    <scope>SUBCELLULAR LOCATION</scope>
    <scope>DISRUPTION PHENOTYPE</scope>
    <scope>INTERACTION WITH PPARG</scope>
</reference>
<reference key="10">
    <citation type="journal article" date="2011" name="Ann. N. Y. Acad. Sci.">
        <title>An essential role for the circadian-regulated gene nocturnin in osteogenesis: the importance of local timekeeping in skeletal homeostasis.</title>
        <authorList>
            <person name="Guntur A.R."/>
            <person name="Kawai M."/>
            <person name="Le P."/>
            <person name="Bouxsein M.L."/>
            <person name="Bornstein S."/>
            <person name="Green C.B."/>
            <person name="Rosen C.J."/>
        </authorList>
    </citation>
    <scope>FUNCTION</scope>
</reference>
<reference key="11">
    <citation type="journal article" date="2011" name="Curr. Biol.">
        <title>Nocturnin regulates circadian trafficking of dietary lipid in intestinal enterocytes.</title>
        <authorList>
            <person name="Douris N."/>
            <person name="Kojima S."/>
            <person name="Pan X."/>
            <person name="Lerch-Gaggl A.F."/>
            <person name="Duong S.Q."/>
            <person name="Hussain M.M."/>
            <person name="Green C.B."/>
        </authorList>
    </citation>
    <scope>FUNCTION</scope>
    <scope>DISRUPTION PHENOTYPE</scope>
</reference>
<reference key="12">
    <citation type="journal article" date="2011" name="PLoS ONE">
        <title>The circadian deadenylase Nocturnin is necessary for stabilization of the iNOS mRNA in mice.</title>
        <authorList>
            <person name="Niu S."/>
            <person name="Shingle D.L."/>
            <person name="Garbarino-Pico E."/>
            <person name="Kojima S."/>
            <person name="Gilbert M."/>
            <person name="Green C.B."/>
        </authorList>
    </citation>
    <scope>FUNCTION</scope>
    <scope>INDUCTION</scope>
</reference>
<reference key="13">
    <citation type="journal article" date="2012" name="Obesity">
        <title>The role of nocturnin in early adipogenesis and modulation of systemic insulin resistance in human.</title>
        <authorList>
            <person name="Hee S.W."/>
            <person name="Tsai S.H."/>
            <person name="Chang Y.C."/>
            <person name="Chang C.J."/>
            <person name="Yu I.S."/>
            <person name="Lee P.C."/>
            <person name="Lee W.J."/>
            <person name="Yun-Chia Chang E."/>
            <person name="Chuang L.M."/>
        </authorList>
    </citation>
    <scope>FUNCTION</scope>
</reference>
<reference key="14">
    <citation type="journal article" date="2013" name="J. Reprod. Dev.">
        <title>Functional analysis of nocturnin, a circadian deadenylase, at maternal-to-zygotic transition in mice.</title>
        <authorList>
            <person name="Nishikawa S."/>
            <person name="Hatanaka Y."/>
            <person name="Tokoro M."/>
            <person name="Shin S.W."/>
            <person name="Shimizu N."/>
            <person name="Nishihara T."/>
            <person name="Kato R."/>
            <person name="Takemoto A."/>
            <person name="Amano T."/>
            <person name="Anzai M."/>
            <person name="Kishigami S."/>
            <person name="Hosoi Y."/>
            <person name="Matsumoto K."/>
        </authorList>
    </citation>
    <scope>FUNCTION</scope>
    <scope>SUBCELLULAR LOCATION</scope>
    <scope>DEVELOPMENTAL STAGE</scope>
    <scope>DISRUPTION PHENOTYPE</scope>
</reference>
<reference key="15">
    <citation type="journal article" date="2018" name="Nucleic Acids Res.">
        <title>The structure of human Nocturnin reveals a conserved ribonuclease domain that represses target transcript translation and abundance in cells.</title>
        <authorList>
            <person name="Abshire E.T."/>
            <person name="Chasseur J."/>
            <person name="Bohn J.A."/>
            <person name="Del Rizzo P.A."/>
            <person name="Freddolino P.L."/>
            <person name="Goldstrohm A.C."/>
            <person name="Trievel R.C."/>
        </authorList>
    </citation>
    <scope>LACK OF ADENYLASE ACTIVITY</scope>
</reference>
<organism>
    <name type="scientific">Mus musculus</name>
    <name type="common">Mouse</name>
    <dbReference type="NCBI Taxonomy" id="10090"/>
    <lineage>
        <taxon>Eukaryota</taxon>
        <taxon>Metazoa</taxon>
        <taxon>Chordata</taxon>
        <taxon>Craniata</taxon>
        <taxon>Vertebrata</taxon>
        <taxon>Euteleostomi</taxon>
        <taxon>Mammalia</taxon>
        <taxon>Eutheria</taxon>
        <taxon>Euarchontoglires</taxon>
        <taxon>Glires</taxon>
        <taxon>Rodentia</taxon>
        <taxon>Myomorpha</taxon>
        <taxon>Muroidea</taxon>
        <taxon>Muridae</taxon>
        <taxon>Murinae</taxon>
        <taxon>Mus</taxon>
        <taxon>Mus</taxon>
    </lineage>
</organism>
<sequence>MYQSPRRLCSALLLRDAPGLRRTLVPGPRRTLAPPVLGSRPKSPQLQAAAASGAARSRPRTVSSMGNGTSRLYSALAKTVNSSAAAQHPEYLVSTDPEHLEPIDPKELLEECRAVLHTRPPRYQRDFVDLRTDCSSSHSPIRVMQWNILAQALGEGKDNFVQCPVEALKWEERKCLILEEILAYQPDILCLQEVDHYFDTFQPLLSRLGYQGTFFPKPWSPCLDVEHNNGPDGCALFFLQNRFKLISSTNIRLTAMTLKTNQVAIAQTLECKESGRQFCIAVTHLKARTGWERFRSAQGCDLLQNLQNITQGAKIPLIVCGDFNAEPTEEVYKHFASSSLNLNSAYKLLSPDGQSEPPYTTWKIRTSGECRHTLDYIWYSRHALSVTSALDLLTEEQIGPNRLPSFHYPSDHLSLVCDFSFNEEPHELF</sequence>
<comment type="function">
    <text evidence="1 8 9 10 11 12 13 14">Phosphatase which catalyzes the conversion of NADP(+) to NAD(+) and of NADPH to NADH (By similarity). Shows a small preference for NADPH over NADP(+) (By similarity). Represses translation and promotes degradation of target mRNA molecules (By similarity). Plays an important role in post-transcriptional regulation of metabolic genes under circadian control (PubMed:20498072, PubMed:20685873). Exerts a rhythmic post-transcriptional control of genes necessary for metabolic functions including nutrient absorption, glucose/insulin sensitivity, lipid metabolism, adipogenesis, inflammation and osteogenesis (PubMed:20498072, PubMed:21820310, PubMed:22073225, PubMed:22082366, PubMed:22331129). Plays an important role in favoring adipogenesis over osteoblastogenesis and acts as a key regulator of the adipogenesis/osteogenesis balance (PubMed:20498072, PubMed:22082366). Promotes adipogenesis by facilitating PPARG nuclear translocation which activates its transcriptional activity (PubMed:20498072). Regulates circadian expression of NOS2 in the liver and negatively regulates the circadian expression of IGF1 in the bone (PubMed:20685873, PubMed:22073225). Critical for proper development of early embryos (PubMed:23449310).</text>
</comment>
<comment type="catalytic activity">
    <reaction evidence="1">
        <text>NADP(+) + H2O = phosphate + NAD(+)</text>
        <dbReference type="Rhea" id="RHEA:28050"/>
        <dbReference type="ChEBI" id="CHEBI:15377"/>
        <dbReference type="ChEBI" id="CHEBI:43474"/>
        <dbReference type="ChEBI" id="CHEBI:57540"/>
        <dbReference type="ChEBI" id="CHEBI:58349"/>
        <dbReference type="EC" id="3.1.3.108"/>
    </reaction>
    <physiologicalReaction direction="left-to-right" evidence="1">
        <dbReference type="Rhea" id="RHEA:28051"/>
    </physiologicalReaction>
</comment>
<comment type="catalytic activity">
    <reaction evidence="1">
        <text>NADPH + H2O = phosphate + NADH</text>
        <dbReference type="Rhea" id="RHEA:60664"/>
        <dbReference type="ChEBI" id="CHEBI:15377"/>
        <dbReference type="ChEBI" id="CHEBI:43474"/>
        <dbReference type="ChEBI" id="CHEBI:57783"/>
        <dbReference type="ChEBI" id="CHEBI:57945"/>
        <dbReference type="EC" id="3.1.3.108"/>
    </reaction>
    <physiologicalReaction direction="left-to-right" evidence="1">
        <dbReference type="Rhea" id="RHEA:60665"/>
    </physiologicalReaction>
</comment>
<comment type="cofactor">
    <cofactor evidence="1">
        <name>Mg(2+)</name>
        <dbReference type="ChEBI" id="CHEBI:18420"/>
    </cofactor>
    <text evidence="1">Binds 2 magnesium ions, but the ions are only loosely bound to the protein.</text>
</comment>
<comment type="subunit">
    <text evidence="8">Interacts with PPARG.</text>
</comment>
<comment type="subcellular location">
    <subcellularLocation>
        <location evidence="14">Cytoplasm</location>
    </subcellularLocation>
    <subcellularLocation>
        <location evidence="14">Nucleus</location>
    </subcellularLocation>
    <subcellularLocation>
        <location evidence="8">Cytoplasm</location>
        <location evidence="8">Perinuclear region</location>
    </subcellularLocation>
    <subcellularLocation>
        <location evidence="1">Mitochondrion</location>
    </subcellularLocation>
</comment>
<comment type="alternative products">
    <event type="alternative splicing"/>
    <isoform>
        <id>O35710-1</id>
        <name>1</name>
        <sequence type="displayed"/>
    </isoform>
    <isoform>
        <id>O35710-2</id>
        <name>2</name>
        <sequence type="described" ref="VSP_016677"/>
    </isoform>
</comment>
<comment type="tissue specificity">
    <text evidence="4 5 7">Highly expressed in the differentiated adipocyte (at protein level). Ubiquitous.</text>
</comment>
<comment type="developmental stage">
    <text evidence="14">Expression is highest in oocytes, begins to decrease after fertilization by the 4-cell stage and then slightly increases up to the blastocyst stage.</text>
</comment>
<comment type="induction">
    <text evidence="6 7 9 11">Immediate early gene (IEG) showing acute responses to several stimuli including serum shock, phorbol ester, lipopolysaccharide (LPS) and rosiglitazone, a PPARG agonist. Exhibits a high amplitude circadian rhythm with maximal levels in early evening. In constant darkness or constant light, the amplitude of the rhythm decreases. Expression is regulated by both light and food-entrained cues and by the CLOCK-BMAL1 heterodimer and PPARG. Up-regulated in cells undergoing adipogenesis.</text>
</comment>
<comment type="disruption phenotype">
    <text evidence="8 10 14">Mice exhibit metabolic defects including a resistance to diet-induced obesity, decreased fat storage, changes in lipid-related gene expression profiles in the liver, and altered glucose and insulin sensitivities. Exhibit a delayed early embryo development and at 12 weeks of age show enhanced skeletal mass and increased osteoblastogenesis.</text>
</comment>
<comment type="similarity">
    <text evidence="17">Belongs to the CCR4/nocturin family.</text>
</comment>
<comment type="caution">
    <text evidence="1 6 15">Was initially shown to have low deadenylase activity that was lost when the metal-binding Glu was mutated (PubMed:17400819). Later studies showed that the purified protein lacked deadenylase activity (PubMed:29860338). Was subsequently shown to act as a phosphatase (By similarity).</text>
</comment>
<comment type="sequence caution" evidence="17">
    <conflict type="frameshift">
        <sequence resource="EMBL-CDS" id="AAB62717"/>
    </conflict>
</comment>
<name>NOCT_MOUSE</name>
<gene>
    <name evidence="18" type="primary">Noct</name>
    <name type="synonym">Ccr4</name>
    <name type="synonym">Ccrn4l</name>
    <name type="synonym">Noc</name>
</gene>
<keyword id="KW-0025">Alternative splicing</keyword>
<keyword id="KW-0090">Biological rhythms</keyword>
<keyword id="KW-0963">Cytoplasm</keyword>
<keyword id="KW-0378">Hydrolase</keyword>
<keyword id="KW-0460">Magnesium</keyword>
<keyword id="KW-0479">Metal-binding</keyword>
<keyword id="KW-0496">Mitochondrion</keyword>
<keyword id="KW-0539">Nucleus</keyword>
<keyword id="KW-1185">Reference proteome</keyword>
<keyword id="KW-0678">Repressor</keyword>
<keyword id="KW-0694">RNA-binding</keyword>
<keyword id="KW-0809">Transit peptide</keyword>